<reference key="1">
    <citation type="submission" date="2006-03" db="EMBL/GenBank/DDBJ databases">
        <title>Complete genome sequence of Francisella tularensis LVS (Live Vaccine Strain).</title>
        <authorList>
            <person name="Chain P."/>
            <person name="Larimer F."/>
            <person name="Land M."/>
            <person name="Stilwagen S."/>
            <person name="Larsson P."/>
            <person name="Bearden S."/>
            <person name="Chu M."/>
            <person name="Oyston P."/>
            <person name="Forsman M."/>
            <person name="Andersson S."/>
            <person name="Lindler L."/>
            <person name="Titball R."/>
            <person name="Garcia E."/>
        </authorList>
    </citation>
    <scope>NUCLEOTIDE SEQUENCE [LARGE SCALE GENOMIC DNA]</scope>
    <source>
        <strain>LVS</strain>
    </source>
</reference>
<accession>Q2A1I0</accession>
<dbReference type="EC" id="7.1.2.2" evidence="1"/>
<dbReference type="EMBL" id="AM233362">
    <property type="protein sequence ID" value="CAJ80236.1"/>
    <property type="molecule type" value="Genomic_DNA"/>
</dbReference>
<dbReference type="RefSeq" id="WP_003017337.1">
    <property type="nucleotide sequence ID" value="NZ_CP009694.1"/>
</dbReference>
<dbReference type="SMR" id="Q2A1I0"/>
<dbReference type="KEGG" id="ftl:FTL_1797"/>
<dbReference type="Proteomes" id="UP000001944">
    <property type="component" value="Chromosome"/>
</dbReference>
<dbReference type="GO" id="GO:0005886">
    <property type="term" value="C:plasma membrane"/>
    <property type="evidence" value="ECO:0007669"/>
    <property type="project" value="UniProtKB-SubCell"/>
</dbReference>
<dbReference type="GO" id="GO:0045259">
    <property type="term" value="C:proton-transporting ATP synthase complex"/>
    <property type="evidence" value="ECO:0007669"/>
    <property type="project" value="UniProtKB-KW"/>
</dbReference>
<dbReference type="GO" id="GO:0043531">
    <property type="term" value="F:ADP binding"/>
    <property type="evidence" value="ECO:0007669"/>
    <property type="project" value="TreeGrafter"/>
</dbReference>
<dbReference type="GO" id="GO:0005524">
    <property type="term" value="F:ATP binding"/>
    <property type="evidence" value="ECO:0007669"/>
    <property type="project" value="UniProtKB-UniRule"/>
</dbReference>
<dbReference type="GO" id="GO:0046933">
    <property type="term" value="F:proton-transporting ATP synthase activity, rotational mechanism"/>
    <property type="evidence" value="ECO:0007669"/>
    <property type="project" value="UniProtKB-UniRule"/>
</dbReference>
<dbReference type="CDD" id="cd18113">
    <property type="entry name" value="ATP-synt_F1_alpha_C"/>
    <property type="match status" value="1"/>
</dbReference>
<dbReference type="CDD" id="cd18116">
    <property type="entry name" value="ATP-synt_F1_alpha_N"/>
    <property type="match status" value="1"/>
</dbReference>
<dbReference type="CDD" id="cd01132">
    <property type="entry name" value="F1-ATPase_alpha_CD"/>
    <property type="match status" value="1"/>
</dbReference>
<dbReference type="FunFam" id="1.20.150.20:FF:000001">
    <property type="entry name" value="ATP synthase subunit alpha"/>
    <property type="match status" value="1"/>
</dbReference>
<dbReference type="FunFam" id="2.40.30.20:FF:000001">
    <property type="entry name" value="ATP synthase subunit alpha"/>
    <property type="match status" value="1"/>
</dbReference>
<dbReference type="FunFam" id="3.40.50.300:FF:000002">
    <property type="entry name" value="ATP synthase subunit alpha"/>
    <property type="match status" value="1"/>
</dbReference>
<dbReference type="Gene3D" id="2.40.30.20">
    <property type="match status" value="1"/>
</dbReference>
<dbReference type="Gene3D" id="1.20.150.20">
    <property type="entry name" value="ATP synthase alpha/beta chain, C-terminal domain"/>
    <property type="match status" value="1"/>
</dbReference>
<dbReference type="Gene3D" id="3.40.50.300">
    <property type="entry name" value="P-loop containing nucleotide triphosphate hydrolases"/>
    <property type="match status" value="1"/>
</dbReference>
<dbReference type="HAMAP" id="MF_01346">
    <property type="entry name" value="ATP_synth_alpha_bact"/>
    <property type="match status" value="1"/>
</dbReference>
<dbReference type="InterPro" id="IPR023366">
    <property type="entry name" value="ATP_synth_asu-like_sf"/>
</dbReference>
<dbReference type="InterPro" id="IPR000793">
    <property type="entry name" value="ATP_synth_asu_C"/>
</dbReference>
<dbReference type="InterPro" id="IPR038376">
    <property type="entry name" value="ATP_synth_asu_C_sf"/>
</dbReference>
<dbReference type="InterPro" id="IPR033732">
    <property type="entry name" value="ATP_synth_F1_a_nt-bd_dom"/>
</dbReference>
<dbReference type="InterPro" id="IPR005294">
    <property type="entry name" value="ATP_synth_F1_asu"/>
</dbReference>
<dbReference type="InterPro" id="IPR020003">
    <property type="entry name" value="ATPase_a/bsu_AS"/>
</dbReference>
<dbReference type="InterPro" id="IPR004100">
    <property type="entry name" value="ATPase_F1/V1/A1_a/bsu_N"/>
</dbReference>
<dbReference type="InterPro" id="IPR036121">
    <property type="entry name" value="ATPase_F1/V1/A1_a/bsu_N_sf"/>
</dbReference>
<dbReference type="InterPro" id="IPR000194">
    <property type="entry name" value="ATPase_F1/V1/A1_a/bsu_nucl-bd"/>
</dbReference>
<dbReference type="InterPro" id="IPR027417">
    <property type="entry name" value="P-loop_NTPase"/>
</dbReference>
<dbReference type="NCBIfam" id="TIGR00962">
    <property type="entry name" value="atpA"/>
    <property type="match status" value="1"/>
</dbReference>
<dbReference type="NCBIfam" id="NF009884">
    <property type="entry name" value="PRK13343.1"/>
    <property type="match status" value="1"/>
</dbReference>
<dbReference type="PANTHER" id="PTHR48082">
    <property type="entry name" value="ATP SYNTHASE SUBUNIT ALPHA, MITOCHONDRIAL"/>
    <property type="match status" value="1"/>
</dbReference>
<dbReference type="PANTHER" id="PTHR48082:SF2">
    <property type="entry name" value="ATP SYNTHASE SUBUNIT ALPHA, MITOCHONDRIAL"/>
    <property type="match status" value="1"/>
</dbReference>
<dbReference type="Pfam" id="PF00006">
    <property type="entry name" value="ATP-synt_ab"/>
    <property type="match status" value="1"/>
</dbReference>
<dbReference type="Pfam" id="PF00306">
    <property type="entry name" value="ATP-synt_ab_C"/>
    <property type="match status" value="1"/>
</dbReference>
<dbReference type="Pfam" id="PF02874">
    <property type="entry name" value="ATP-synt_ab_N"/>
    <property type="match status" value="1"/>
</dbReference>
<dbReference type="PIRSF" id="PIRSF039088">
    <property type="entry name" value="F_ATPase_subunit_alpha"/>
    <property type="match status" value="1"/>
</dbReference>
<dbReference type="SUPFAM" id="SSF47917">
    <property type="entry name" value="C-terminal domain of alpha and beta subunits of F1 ATP synthase"/>
    <property type="match status" value="1"/>
</dbReference>
<dbReference type="SUPFAM" id="SSF50615">
    <property type="entry name" value="N-terminal domain of alpha and beta subunits of F1 ATP synthase"/>
    <property type="match status" value="1"/>
</dbReference>
<dbReference type="SUPFAM" id="SSF52540">
    <property type="entry name" value="P-loop containing nucleoside triphosphate hydrolases"/>
    <property type="match status" value="1"/>
</dbReference>
<dbReference type="PROSITE" id="PS00152">
    <property type="entry name" value="ATPASE_ALPHA_BETA"/>
    <property type="match status" value="1"/>
</dbReference>
<comment type="function">
    <text evidence="1">Produces ATP from ADP in the presence of a proton gradient across the membrane. The alpha chain is a regulatory subunit.</text>
</comment>
<comment type="catalytic activity">
    <reaction evidence="1">
        <text>ATP + H2O + 4 H(+)(in) = ADP + phosphate + 5 H(+)(out)</text>
        <dbReference type="Rhea" id="RHEA:57720"/>
        <dbReference type="ChEBI" id="CHEBI:15377"/>
        <dbReference type="ChEBI" id="CHEBI:15378"/>
        <dbReference type="ChEBI" id="CHEBI:30616"/>
        <dbReference type="ChEBI" id="CHEBI:43474"/>
        <dbReference type="ChEBI" id="CHEBI:456216"/>
        <dbReference type="EC" id="7.1.2.2"/>
    </reaction>
</comment>
<comment type="subunit">
    <text evidence="1">F-type ATPases have 2 components, CF(1) - the catalytic core - and CF(0) - the membrane proton channel. CF(1) has five subunits: alpha(3), beta(3), gamma(1), delta(1), epsilon(1). CF(0) has three main subunits: a(1), b(2) and c(9-12). The alpha and beta chains form an alternating ring which encloses part of the gamma chain. CF(1) is attached to CF(0) by a central stalk formed by the gamma and epsilon chains, while a peripheral stalk is formed by the delta and b chains.</text>
</comment>
<comment type="subcellular location">
    <subcellularLocation>
        <location evidence="1">Cell inner membrane</location>
        <topology evidence="1">Peripheral membrane protein</topology>
    </subcellularLocation>
</comment>
<comment type="similarity">
    <text evidence="1">Belongs to the ATPase alpha/beta chains family.</text>
</comment>
<name>ATPA_FRATH</name>
<sequence length="513" mass="55536">MQLSPSEISGLIKQRIEKFDNSVELKSEGTIVSVADGIVTIYGLNDVTAGEMIKLPGDVYGLALNLNTDSVGAVVLGDYEHIKEGDKAYCTGRILEVPVGEALLGRVVDALGNPIDGKGEVATDLTSPIEKIAPGVIWRKSVDQALQTGIKSIDSMVPIGRGQRELIIGDRQIGKTAIAVDTIINQKGTGVKCIYVAIGQKASTIANIVRQLEEYGAMEHTIIVAATASDSAALQYIAPYAGCSMGEYFRDRGQDALIVYDDLTKQAWAYRQISLLLRRPPGREAYPGDVFYLHSRLLERAARVNEEYVEKFTNGEVKGKTGSLTALPIIETQAGDISAFVPTNVISITDGQIFLETDLFNSGLRPAINPGNSVSRVGGAAQTKIIKKLGGGIRLALAQYRELEAFSQFASDLDEATRAQLNRGQRVTELLKQKQFSTLSVALMALSLYAADNGYLDNLEVSEVIPFESALHALAETKYSDVIAEINETDKYDADIADKLKIIVEDCKANQAW</sequence>
<gene>
    <name evidence="1" type="primary">atpA</name>
    <name type="ordered locus">FTL_1797</name>
</gene>
<proteinExistence type="inferred from homology"/>
<keyword id="KW-0066">ATP synthesis</keyword>
<keyword id="KW-0067">ATP-binding</keyword>
<keyword id="KW-0997">Cell inner membrane</keyword>
<keyword id="KW-1003">Cell membrane</keyword>
<keyword id="KW-0139">CF(1)</keyword>
<keyword id="KW-0375">Hydrogen ion transport</keyword>
<keyword id="KW-0406">Ion transport</keyword>
<keyword id="KW-0472">Membrane</keyword>
<keyword id="KW-0547">Nucleotide-binding</keyword>
<keyword id="KW-1185">Reference proteome</keyword>
<keyword id="KW-1278">Translocase</keyword>
<keyword id="KW-0813">Transport</keyword>
<feature type="chain" id="PRO_0000256090" description="ATP synthase subunit alpha">
    <location>
        <begin position="1"/>
        <end position="513"/>
    </location>
</feature>
<feature type="binding site" evidence="1">
    <location>
        <begin position="169"/>
        <end position="176"/>
    </location>
    <ligand>
        <name>ATP</name>
        <dbReference type="ChEBI" id="CHEBI:30616"/>
    </ligand>
</feature>
<feature type="site" description="Required for activity" evidence="1">
    <location>
        <position position="373"/>
    </location>
</feature>
<protein>
    <recommendedName>
        <fullName evidence="1">ATP synthase subunit alpha</fullName>
        <ecNumber evidence="1">7.1.2.2</ecNumber>
    </recommendedName>
    <alternativeName>
        <fullName evidence="1">ATP synthase F1 sector subunit alpha</fullName>
    </alternativeName>
    <alternativeName>
        <fullName evidence="1">F-ATPase subunit alpha</fullName>
    </alternativeName>
</protein>
<evidence type="ECO:0000255" key="1">
    <source>
        <dbReference type="HAMAP-Rule" id="MF_01346"/>
    </source>
</evidence>
<organism>
    <name type="scientific">Francisella tularensis subsp. holarctica (strain LVS)</name>
    <dbReference type="NCBI Taxonomy" id="376619"/>
    <lineage>
        <taxon>Bacteria</taxon>
        <taxon>Pseudomonadati</taxon>
        <taxon>Pseudomonadota</taxon>
        <taxon>Gammaproteobacteria</taxon>
        <taxon>Thiotrichales</taxon>
        <taxon>Francisellaceae</taxon>
        <taxon>Francisella</taxon>
    </lineage>
</organism>